<organism>
    <name type="scientific">Rattus norvegicus</name>
    <name type="common">Rat</name>
    <dbReference type="NCBI Taxonomy" id="10116"/>
    <lineage>
        <taxon>Eukaryota</taxon>
        <taxon>Metazoa</taxon>
        <taxon>Chordata</taxon>
        <taxon>Craniata</taxon>
        <taxon>Vertebrata</taxon>
        <taxon>Euteleostomi</taxon>
        <taxon>Mammalia</taxon>
        <taxon>Eutheria</taxon>
        <taxon>Euarchontoglires</taxon>
        <taxon>Glires</taxon>
        <taxon>Rodentia</taxon>
        <taxon>Myomorpha</taxon>
        <taxon>Muroidea</taxon>
        <taxon>Muridae</taxon>
        <taxon>Murinae</taxon>
        <taxon>Rattus</taxon>
    </lineage>
</organism>
<feature type="chain" id="PRO_0000278098" description="Keratin, type II cytoskeletal 1">
    <location>
        <begin position="1"/>
        <end position="625"/>
    </location>
</feature>
<feature type="domain" description="IF rod" evidence="5">
    <location>
        <begin position="179"/>
        <end position="492"/>
    </location>
</feature>
<feature type="region of interest" description="Head" evidence="4">
    <location>
        <begin position="1"/>
        <end position="178"/>
    </location>
</feature>
<feature type="region of interest" description="Disordered" evidence="6">
    <location>
        <begin position="1"/>
        <end position="27"/>
    </location>
</feature>
<feature type="region of interest" description="Coil 1A" evidence="4">
    <location>
        <begin position="179"/>
        <end position="214"/>
    </location>
</feature>
<feature type="region of interest" description="Linker 1" evidence="4">
    <location>
        <begin position="215"/>
        <end position="233"/>
    </location>
</feature>
<feature type="region of interest" description="Coil 1B" evidence="4">
    <location>
        <begin position="234"/>
        <end position="325"/>
    </location>
</feature>
<feature type="region of interest" description="Linker 12" evidence="4">
    <location>
        <begin position="326"/>
        <end position="349"/>
    </location>
</feature>
<feature type="region of interest" description="Coil 2" evidence="4">
    <location>
        <begin position="350"/>
        <end position="488"/>
    </location>
</feature>
<feature type="region of interest" description="Tail" evidence="4">
    <location>
        <begin position="489"/>
        <end position="625"/>
    </location>
</feature>
<feature type="region of interest" description="Disordered" evidence="6">
    <location>
        <begin position="496"/>
        <end position="525"/>
    </location>
</feature>
<feature type="region of interest" description="Disordered" evidence="6">
    <location>
        <begin position="560"/>
        <end position="625"/>
    </location>
</feature>
<feature type="coiled-coil region" evidence="4">
    <location>
        <begin position="171"/>
        <end position="319"/>
    </location>
</feature>
<feature type="coiled-coil region" evidence="4">
    <location>
        <begin position="388"/>
        <end position="475"/>
    </location>
</feature>
<feature type="compositionally biased region" description="Low complexity" evidence="6">
    <location>
        <begin position="1"/>
        <end position="12"/>
    </location>
</feature>
<feature type="compositionally biased region" description="Low complexity" evidence="6">
    <location>
        <begin position="500"/>
        <end position="515"/>
    </location>
</feature>
<feature type="compositionally biased region" description="Gly residues" evidence="6">
    <location>
        <begin position="516"/>
        <end position="525"/>
    </location>
</feature>
<feature type="compositionally biased region" description="Gly residues" evidence="6">
    <location>
        <begin position="560"/>
        <end position="606"/>
    </location>
</feature>
<feature type="compositionally biased region" description="Polar residues" evidence="6">
    <location>
        <begin position="613"/>
        <end position="625"/>
    </location>
</feature>
<feature type="site" description="Stutter" evidence="4">
    <location>
        <position position="432"/>
    </location>
</feature>
<feature type="modified residue" description="Omega-N-methylarginine" evidence="2">
    <location>
        <position position="12"/>
    </location>
</feature>
<feature type="modified residue" description="Phosphoserine" evidence="2">
    <location>
        <position position="23"/>
    </location>
</feature>
<feature type="modified residue" description="Phosphoserine" evidence="3">
    <location>
        <position position="26"/>
    </location>
</feature>
<feature type="modified residue" description="Omega-N-methylarginine" evidence="2">
    <location>
        <position position="51"/>
    </location>
</feature>
<feature type="modified residue" description="Phosphoserine" evidence="3">
    <location>
        <position position="69"/>
    </location>
</feature>
<feature type="modified residue" description="N6,N6-dimethyllysine" evidence="3">
    <location>
        <position position="275"/>
    </location>
</feature>
<feature type="modified residue" description="Omega-N-methylarginine" evidence="2">
    <location>
        <position position="517"/>
    </location>
</feature>
<feature type="modified residue" description="Omega-N-methylarginine" evidence="2">
    <location>
        <position position="574"/>
    </location>
</feature>
<feature type="modified residue" description="Omega-N-methylarginine" evidence="2">
    <location>
        <position position="596"/>
    </location>
</feature>
<feature type="sequence conflict" description="In Ref. 2; AAI27465." evidence="8" ref="2">
    <original>T</original>
    <variation>S</variation>
    <location>
        <position position="514"/>
    </location>
</feature>
<feature type="sequence conflict" description="In Ref. 2; AAI27465." evidence="8" ref="2">
    <original>T</original>
    <variation>S</variation>
    <location>
        <position position="532"/>
    </location>
</feature>
<feature type="sequence conflict" description="In Ref. 2; AAI27465." evidence="8" ref="2">
    <original>C</original>
    <variation>G</variation>
    <location>
        <position position="554"/>
    </location>
</feature>
<evidence type="ECO:0000250" key="1"/>
<evidence type="ECO:0000250" key="2">
    <source>
        <dbReference type="UniProtKB" id="P04104"/>
    </source>
</evidence>
<evidence type="ECO:0000250" key="3">
    <source>
        <dbReference type="UniProtKB" id="P04264"/>
    </source>
</evidence>
<evidence type="ECO:0000255" key="4"/>
<evidence type="ECO:0000255" key="5">
    <source>
        <dbReference type="PROSITE-ProRule" id="PRU01188"/>
    </source>
</evidence>
<evidence type="ECO:0000256" key="6">
    <source>
        <dbReference type="SAM" id="MobiDB-lite"/>
    </source>
</evidence>
<evidence type="ECO:0000269" key="7">
    <source>
    </source>
</evidence>
<evidence type="ECO:0000305" key="8"/>
<evidence type="ECO:0000312" key="9">
    <source>
        <dbReference type="EMBL" id="CAA38577.1"/>
    </source>
</evidence>
<evidence type="ECO:0000312" key="10">
    <source>
        <dbReference type="EMBL" id="DAA02055.1"/>
    </source>
</evidence>
<evidence type="ECO:0000312" key="11">
    <source>
        <dbReference type="RGD" id="1359664"/>
    </source>
</evidence>
<accession>Q6IMF3</accession>
<accession>A1L113</accession>
<accession>Q63115</accession>
<reference evidence="8" key="1">
    <citation type="journal article" date="2004" name="Nature">
        <title>Genome sequence of the Brown Norway rat yields insights into mammalian evolution.</title>
        <authorList>
            <person name="Gibbs R.A."/>
            <person name="Weinstock G.M."/>
            <person name="Metzker M.L."/>
            <person name="Muzny D.M."/>
            <person name="Sodergren E.J."/>
            <person name="Scherer S."/>
            <person name="Scott G."/>
            <person name="Steffen D."/>
            <person name="Worley K.C."/>
            <person name="Burch P.E."/>
            <person name="Okwuonu G."/>
            <person name="Hines S."/>
            <person name="Lewis L."/>
            <person name="Deramo C."/>
            <person name="Delgado O."/>
            <person name="Dugan-Rocha S."/>
            <person name="Miner G."/>
            <person name="Morgan M."/>
            <person name="Hawes A."/>
            <person name="Gill R."/>
            <person name="Holt R.A."/>
            <person name="Adams M.D."/>
            <person name="Amanatides P.G."/>
            <person name="Baden-Tillson H."/>
            <person name="Barnstead M."/>
            <person name="Chin S."/>
            <person name="Evans C.A."/>
            <person name="Ferriera S."/>
            <person name="Fosler C."/>
            <person name="Glodek A."/>
            <person name="Gu Z."/>
            <person name="Jennings D."/>
            <person name="Kraft C.L."/>
            <person name="Nguyen T."/>
            <person name="Pfannkoch C.M."/>
            <person name="Sitter C."/>
            <person name="Sutton G.G."/>
            <person name="Venter J.C."/>
            <person name="Woodage T."/>
            <person name="Smith D."/>
            <person name="Lee H.-M."/>
            <person name="Gustafson E."/>
            <person name="Cahill P."/>
            <person name="Kana A."/>
            <person name="Doucette-Stamm L."/>
            <person name="Weinstock K."/>
            <person name="Fechtel K."/>
            <person name="Weiss R.B."/>
            <person name="Dunn D.M."/>
            <person name="Green E.D."/>
            <person name="Blakesley R.W."/>
            <person name="Bouffard G.G."/>
            <person name="De Jong P.J."/>
            <person name="Osoegawa K."/>
            <person name="Zhu B."/>
            <person name="Marra M."/>
            <person name="Schein J."/>
            <person name="Bosdet I."/>
            <person name="Fjell C."/>
            <person name="Jones S."/>
            <person name="Krzywinski M."/>
            <person name="Mathewson C."/>
            <person name="Siddiqui A."/>
            <person name="Wye N."/>
            <person name="McPherson J."/>
            <person name="Zhao S."/>
            <person name="Fraser C.M."/>
            <person name="Shetty J."/>
            <person name="Shatsman S."/>
            <person name="Geer K."/>
            <person name="Chen Y."/>
            <person name="Abramzon S."/>
            <person name="Nierman W.C."/>
            <person name="Havlak P.H."/>
            <person name="Chen R."/>
            <person name="Durbin K.J."/>
            <person name="Egan A."/>
            <person name="Ren Y."/>
            <person name="Song X.-Z."/>
            <person name="Li B."/>
            <person name="Liu Y."/>
            <person name="Qin X."/>
            <person name="Cawley S."/>
            <person name="Cooney A.J."/>
            <person name="D'Souza L.M."/>
            <person name="Martin K."/>
            <person name="Wu J.Q."/>
            <person name="Gonzalez-Garay M.L."/>
            <person name="Jackson A.R."/>
            <person name="Kalafus K.J."/>
            <person name="McLeod M.P."/>
            <person name="Milosavljevic A."/>
            <person name="Virk D."/>
            <person name="Volkov A."/>
            <person name="Wheeler D.A."/>
            <person name="Zhang Z."/>
            <person name="Bailey J.A."/>
            <person name="Eichler E.E."/>
            <person name="Tuzun E."/>
            <person name="Birney E."/>
            <person name="Mongin E."/>
            <person name="Ureta-Vidal A."/>
            <person name="Woodwark C."/>
            <person name="Zdobnov E."/>
            <person name="Bork P."/>
            <person name="Suyama M."/>
            <person name="Torrents D."/>
            <person name="Alexandersson M."/>
            <person name="Trask B.J."/>
            <person name="Young J.M."/>
            <person name="Huang H."/>
            <person name="Wang H."/>
            <person name="Xing H."/>
            <person name="Daniels S."/>
            <person name="Gietzen D."/>
            <person name="Schmidt J."/>
            <person name="Stevens K."/>
            <person name="Vitt U."/>
            <person name="Wingrove J."/>
            <person name="Camara F."/>
            <person name="Mar Alba M."/>
            <person name="Abril J.F."/>
            <person name="Guigo R."/>
            <person name="Smit A."/>
            <person name="Dubchak I."/>
            <person name="Rubin E.M."/>
            <person name="Couronne O."/>
            <person name="Poliakov A."/>
            <person name="Huebner N."/>
            <person name="Ganten D."/>
            <person name="Goesele C."/>
            <person name="Hummel O."/>
            <person name="Kreitler T."/>
            <person name="Lee Y.-A."/>
            <person name="Monti J."/>
            <person name="Schulz H."/>
            <person name="Zimdahl H."/>
            <person name="Himmelbauer H."/>
            <person name="Lehrach H."/>
            <person name="Jacob H.J."/>
            <person name="Bromberg S."/>
            <person name="Gullings-Handley J."/>
            <person name="Jensen-Seaman M.I."/>
            <person name="Kwitek A.E."/>
            <person name="Lazar J."/>
            <person name="Pasko D."/>
            <person name="Tonellato P.J."/>
            <person name="Twigger S."/>
            <person name="Ponting C.P."/>
            <person name="Duarte J.M."/>
            <person name="Rice S."/>
            <person name="Goodstadt L."/>
            <person name="Beatson S.A."/>
            <person name="Emes R.D."/>
            <person name="Winter E.E."/>
            <person name="Webber C."/>
            <person name="Brandt P."/>
            <person name="Nyakatura G."/>
            <person name="Adetobi M."/>
            <person name="Chiaromonte F."/>
            <person name="Elnitski L."/>
            <person name="Eswara P."/>
            <person name="Hardison R.C."/>
            <person name="Hou M."/>
            <person name="Kolbe D."/>
            <person name="Makova K."/>
            <person name="Miller W."/>
            <person name="Nekrutenko A."/>
            <person name="Riemer C."/>
            <person name="Schwartz S."/>
            <person name="Taylor J."/>
            <person name="Yang S."/>
            <person name="Zhang Y."/>
            <person name="Lindpaintner K."/>
            <person name="Andrews T.D."/>
            <person name="Caccamo M."/>
            <person name="Clamp M."/>
            <person name="Clarke L."/>
            <person name="Curwen V."/>
            <person name="Durbin R.M."/>
            <person name="Eyras E."/>
            <person name="Searle S.M."/>
            <person name="Cooper G.M."/>
            <person name="Batzoglou S."/>
            <person name="Brudno M."/>
            <person name="Sidow A."/>
            <person name="Stone E.A."/>
            <person name="Payseur B.A."/>
            <person name="Bourque G."/>
            <person name="Lopez-Otin C."/>
            <person name="Puente X.S."/>
            <person name="Chakrabarti K."/>
            <person name="Chatterji S."/>
            <person name="Dewey C."/>
            <person name="Pachter L."/>
            <person name="Bray N."/>
            <person name="Yap V.B."/>
            <person name="Caspi A."/>
            <person name="Tesler G."/>
            <person name="Pevzner P.A."/>
            <person name="Haussler D."/>
            <person name="Roskin K.M."/>
            <person name="Baertsch R."/>
            <person name="Clawson H."/>
            <person name="Furey T.S."/>
            <person name="Hinrichs A.S."/>
            <person name="Karolchik D."/>
            <person name="Kent W.J."/>
            <person name="Rosenbloom K.R."/>
            <person name="Trumbower H."/>
            <person name="Weirauch M."/>
            <person name="Cooper D.N."/>
            <person name="Stenson P.D."/>
            <person name="Ma B."/>
            <person name="Brent M."/>
            <person name="Arumugam M."/>
            <person name="Shteynberg D."/>
            <person name="Copley R.R."/>
            <person name="Taylor M.S."/>
            <person name="Riethman H."/>
            <person name="Mudunuri U."/>
            <person name="Peterson J."/>
            <person name="Guyer M."/>
            <person name="Felsenfeld A."/>
            <person name="Old S."/>
            <person name="Mockrin S."/>
            <person name="Collins F.S."/>
        </authorList>
    </citation>
    <scope>NUCLEOTIDE SEQUENCE [LARGE SCALE GENOMIC DNA]</scope>
    <source>
        <strain evidence="7">Brown Norway</strain>
    </source>
</reference>
<reference key="2">
    <citation type="journal article" date="2004" name="Genome Res.">
        <title>The status, quality, and expansion of the NIH full-length cDNA project: the Mammalian Gene Collection (MGC).</title>
        <authorList>
            <consortium name="The MGC Project Team"/>
        </authorList>
    </citation>
    <scope>NUCLEOTIDE SEQUENCE [LARGE SCALE MRNA]</scope>
    <source>
        <strain>Brown Norway/NHsdMcwi</strain>
        <tissue>Brain</tissue>
    </source>
</reference>
<reference evidence="9" key="3">
    <citation type="submission" date="1990-09" db="EMBL/GenBank/DDBJ databases">
        <authorList>
            <person name="Redfern C.P.F."/>
            <person name="Allen G."/>
        </authorList>
    </citation>
    <scope>NUCLEOTIDE SEQUENCE [MRNA] OF 459-625</scope>
    <source>
        <strain evidence="9">Wistar</strain>
        <tissue evidence="9">Epidermis</tissue>
    </source>
</reference>
<reference evidence="8 10" key="4">
    <citation type="journal article" date="2004" name="Eur. J. Cell Biol.">
        <title>Comprehensive analysis of keratin gene clusters in humans and rodents.</title>
        <authorList>
            <person name="Hesse M."/>
            <person name="Zimek A."/>
            <person name="Weber K."/>
            <person name="Magin T.M."/>
        </authorList>
    </citation>
    <scope>IDENTIFICATION</scope>
</reference>
<dbReference type="EMBL" id="AABR03057642">
    <property type="status" value="NOT_ANNOTATED_CDS"/>
    <property type="molecule type" value="Genomic_DNA"/>
</dbReference>
<dbReference type="EMBL" id="BC127464">
    <property type="protein sequence ID" value="AAI27465.1"/>
    <property type="molecule type" value="mRNA"/>
</dbReference>
<dbReference type="EMBL" id="X54806">
    <property type="protein sequence ID" value="CAA38577.1"/>
    <property type="molecule type" value="mRNA"/>
</dbReference>
<dbReference type="EMBL" id="BK001580">
    <property type="protein sequence ID" value="DAA02055.1"/>
    <property type="molecule type" value="mRNA"/>
</dbReference>
<dbReference type="PIR" id="S21359">
    <property type="entry name" value="S21359"/>
</dbReference>
<dbReference type="RefSeq" id="NP_001008802.2">
    <property type="nucleotide sequence ID" value="NM_001008802.2"/>
</dbReference>
<dbReference type="SMR" id="Q6IMF3"/>
<dbReference type="BioGRID" id="256511">
    <property type="interactions" value="4"/>
</dbReference>
<dbReference type="FunCoup" id="Q6IMF3">
    <property type="interactions" value="143"/>
</dbReference>
<dbReference type="IntAct" id="Q6IMF3">
    <property type="interactions" value="1"/>
</dbReference>
<dbReference type="STRING" id="10116.ENSRNOP00000029276"/>
<dbReference type="GlyGen" id="Q6IMF3">
    <property type="glycosylation" value="1 site, 1 O-linked glycan (1 site)"/>
</dbReference>
<dbReference type="iPTMnet" id="Q6IMF3"/>
<dbReference type="PhosphoSitePlus" id="Q6IMF3"/>
<dbReference type="PaxDb" id="10116-ENSRNOP00000029276"/>
<dbReference type="GeneID" id="300250"/>
<dbReference type="KEGG" id="rno:300250"/>
<dbReference type="UCSC" id="RGD:1359664">
    <property type="organism name" value="rat"/>
</dbReference>
<dbReference type="AGR" id="RGD:1359664"/>
<dbReference type="CTD" id="3848"/>
<dbReference type="RGD" id="1359664">
    <property type="gene designation" value="Krt1"/>
</dbReference>
<dbReference type="eggNOG" id="ENOG502QQIF">
    <property type="taxonomic scope" value="Eukaryota"/>
</dbReference>
<dbReference type="InParanoid" id="Q6IMF3"/>
<dbReference type="OrthoDB" id="9539572at2759"/>
<dbReference type="PhylomeDB" id="Q6IMF3"/>
<dbReference type="TreeFam" id="TF317854"/>
<dbReference type="Reactome" id="R-RNO-6798695">
    <property type="pathway name" value="Neutrophil degranulation"/>
</dbReference>
<dbReference type="Reactome" id="R-RNO-6805567">
    <property type="pathway name" value="Keratinization"/>
</dbReference>
<dbReference type="Reactome" id="R-RNO-6809371">
    <property type="pathway name" value="Formation of the cornified envelope"/>
</dbReference>
<dbReference type="PRO" id="PR:Q6IMF3"/>
<dbReference type="Proteomes" id="UP000002494">
    <property type="component" value="Unplaced"/>
</dbReference>
<dbReference type="GO" id="GO:0001533">
    <property type="term" value="C:cornified envelope"/>
    <property type="evidence" value="ECO:0000266"/>
    <property type="project" value="RGD"/>
</dbReference>
<dbReference type="GO" id="GO:0005737">
    <property type="term" value="C:cytoplasm"/>
    <property type="evidence" value="ECO:0000250"/>
    <property type="project" value="UniProtKB"/>
</dbReference>
<dbReference type="GO" id="GO:0045095">
    <property type="term" value="C:keratin filament"/>
    <property type="evidence" value="ECO:0000266"/>
    <property type="project" value="RGD"/>
</dbReference>
<dbReference type="GO" id="GO:0016020">
    <property type="term" value="C:membrane"/>
    <property type="evidence" value="ECO:0000266"/>
    <property type="project" value="RGD"/>
</dbReference>
<dbReference type="GO" id="GO:0030246">
    <property type="term" value="F:carbohydrate binding"/>
    <property type="evidence" value="ECO:0000266"/>
    <property type="project" value="RGD"/>
</dbReference>
<dbReference type="GO" id="GO:0046982">
    <property type="term" value="F:protein heterodimerization activity"/>
    <property type="evidence" value="ECO:0000250"/>
    <property type="project" value="UniProtKB"/>
</dbReference>
<dbReference type="GO" id="GO:0030280">
    <property type="term" value="F:structural constituent of skin epidermis"/>
    <property type="evidence" value="ECO:0000266"/>
    <property type="project" value="RGD"/>
</dbReference>
<dbReference type="GO" id="GO:0001867">
    <property type="term" value="P:complement activation, lectin pathway"/>
    <property type="evidence" value="ECO:0000266"/>
    <property type="project" value="RGD"/>
</dbReference>
<dbReference type="GO" id="GO:0061436">
    <property type="term" value="P:establishment of skin barrier"/>
    <property type="evidence" value="ECO:0000266"/>
    <property type="project" value="RGD"/>
</dbReference>
<dbReference type="GO" id="GO:0045109">
    <property type="term" value="P:intermediate filament organization"/>
    <property type="evidence" value="ECO:0000318"/>
    <property type="project" value="GO_Central"/>
</dbReference>
<dbReference type="GO" id="GO:0031424">
    <property type="term" value="P:keratinization"/>
    <property type="evidence" value="ECO:0000318"/>
    <property type="project" value="GO_Central"/>
</dbReference>
<dbReference type="GO" id="GO:0050728">
    <property type="term" value="P:negative regulation of inflammatory response"/>
    <property type="evidence" value="ECO:0000266"/>
    <property type="project" value="RGD"/>
</dbReference>
<dbReference type="GO" id="GO:0051290">
    <property type="term" value="P:protein heterotetramerization"/>
    <property type="evidence" value="ECO:0000250"/>
    <property type="project" value="UniProtKB"/>
</dbReference>
<dbReference type="FunFam" id="1.20.5.1160:FF:000001">
    <property type="entry name" value="Keratin type II"/>
    <property type="match status" value="1"/>
</dbReference>
<dbReference type="FunFam" id="1.20.5.170:FF:000004">
    <property type="entry name" value="Keratin, type II cytoskeletal 5"/>
    <property type="match status" value="1"/>
</dbReference>
<dbReference type="FunFam" id="1.20.5.500:FF:000001">
    <property type="entry name" value="Type II keratin 23"/>
    <property type="match status" value="1"/>
</dbReference>
<dbReference type="Gene3D" id="1.20.5.170">
    <property type="match status" value="1"/>
</dbReference>
<dbReference type="Gene3D" id="1.20.5.500">
    <property type="entry name" value="Single helix bin"/>
    <property type="match status" value="1"/>
</dbReference>
<dbReference type="Gene3D" id="1.20.5.1160">
    <property type="entry name" value="Vasodilator-stimulated phosphoprotein"/>
    <property type="match status" value="1"/>
</dbReference>
<dbReference type="InterPro" id="IPR018039">
    <property type="entry name" value="IF_conserved"/>
</dbReference>
<dbReference type="InterPro" id="IPR039008">
    <property type="entry name" value="IF_rod_dom"/>
</dbReference>
<dbReference type="InterPro" id="IPR032449">
    <property type="entry name" value="Keratin_2_1_tail"/>
</dbReference>
<dbReference type="InterPro" id="IPR032444">
    <property type="entry name" value="Keratin_2_head"/>
</dbReference>
<dbReference type="InterPro" id="IPR003054">
    <property type="entry name" value="Keratin_II"/>
</dbReference>
<dbReference type="PANTHER" id="PTHR45616">
    <property type="entry name" value="GATA-TYPE DOMAIN-CONTAINING PROTEIN"/>
    <property type="match status" value="1"/>
</dbReference>
<dbReference type="PANTHER" id="PTHR45616:SF33">
    <property type="entry name" value="KERATIN, TYPE II CYTOSKELETAL 1"/>
    <property type="match status" value="1"/>
</dbReference>
<dbReference type="Pfam" id="PF00038">
    <property type="entry name" value="Filament"/>
    <property type="match status" value="1"/>
</dbReference>
<dbReference type="Pfam" id="PF16208">
    <property type="entry name" value="Keratin_2_head"/>
    <property type="match status" value="1"/>
</dbReference>
<dbReference type="Pfam" id="PF16210">
    <property type="entry name" value="Keratin_2_tail"/>
    <property type="match status" value="1"/>
</dbReference>
<dbReference type="PRINTS" id="PR01276">
    <property type="entry name" value="TYPE2KERATIN"/>
</dbReference>
<dbReference type="SMART" id="SM01391">
    <property type="entry name" value="Filament"/>
    <property type="match status" value="1"/>
</dbReference>
<dbReference type="SUPFAM" id="SSF64593">
    <property type="entry name" value="Intermediate filament protein, coiled coil region"/>
    <property type="match status" value="3"/>
</dbReference>
<dbReference type="PROSITE" id="PS00226">
    <property type="entry name" value="IF_ROD_1"/>
    <property type="match status" value="1"/>
</dbReference>
<dbReference type="PROSITE" id="PS51842">
    <property type="entry name" value="IF_ROD_2"/>
    <property type="match status" value="1"/>
</dbReference>
<gene>
    <name evidence="3" type="primary">Krt1</name>
    <name evidence="11" type="synonym">Kb1</name>
</gene>
<protein>
    <recommendedName>
        <fullName>Keratin, type II cytoskeletal 1</fullName>
    </recommendedName>
    <alternativeName>
        <fullName>Cytokeratin-1</fullName>
        <shortName>CK-1</shortName>
    </alternativeName>
    <alternativeName>
        <fullName>Keratin-1</fullName>
        <shortName>K1</shortName>
    </alternativeName>
    <alternativeName>
        <fullName>Type-II keratin Kb1</fullName>
    </alternativeName>
</protein>
<keyword id="KW-1003">Cell membrane</keyword>
<keyword id="KW-0164">Citrullination</keyword>
<keyword id="KW-0175">Coiled coil</keyword>
<keyword id="KW-0963">Cytoplasm</keyword>
<keyword id="KW-0403">Intermediate filament</keyword>
<keyword id="KW-0416">Keratin</keyword>
<keyword id="KW-0472">Membrane</keyword>
<keyword id="KW-0488">Methylation</keyword>
<keyword id="KW-0597">Phosphoprotein</keyword>
<keyword id="KW-1185">Reference proteome</keyword>
<sequence length="625" mass="64831">MSFQCSSRSLCRSGGGGGGRNFSSGSAGLVSFQRRSTSSSMRRSGGGGGGRFSGGGFCGSSGGGFGSKSLVNLGGGRSISISVAGGGSSYGGGFGGGSYGGGSFGGGSFGGGVGGGFGGGGFGGGGFGSGGGFGGGRFGGGFGPVCPPGGIQEVTINQSLLQPLNVEVDPQIQKVKSQEREQIKSLNDKFASFIDKVRFLEQQNQVLQTKWELLQQVDTSTRTQNLDPFFESYISNLRRQVDSLKNDQSRMDSELKNMQDLVEEYRTKYEDEINKRTNAENEFVTIKKDVDSAYMNKAELQARVDNLQQDIDFFSTLYQMELSQMQTQISETNVVLSMDNNRTLDLDGIIAEVKAQYDSICQRSKAEAETFYQSKYEELQITAGKHGDSVKNTKMEISELNRVIQRLRSEIDSVKKQISQMQQNISDAEQRGEKALKDAQNKLNEIEDALTQAKEELTRLLRDYQELMNTKLALDMEIATYRKLLEGEEIRMSGECTPNVSVSVSTSHTSMSGTSSRGGGRYGSGGGGGGGTYGGGSRGGSYGGGSGGGSYGGCSSGGGSGGGSYGGGSSGGHRGGSGGGGGSSGGSYGGSSGGGRGGSSSGGGVKSSGSSSVKFVSTTYSRGTN</sequence>
<proteinExistence type="evidence at transcript level"/>
<name>K2C1_RAT</name>
<comment type="function">
    <text evidence="1">May regulate the activity of kinases such as PKC and SRC via binding to integrin beta-1 (ITB1) and the receptor of activated protein C kinase 1 (RACK1). In complex with C1QBP is a high affinity receptor for kininogen-1/HMWK (By similarity).</text>
</comment>
<comment type="subunit">
    <text evidence="2 3">Heterotetramer of two type I and two type II keratins (By similarity). Heterodimer with KRT10 (By similarity). Two heterodimers of KRT1 and KRT10 form a heterotetramer (By similarity). Forms a heterodimer with KRT14; the interaction is more abundant in the absence of KRT5 (By similarity). Interacts with ITGB1 in the presence of RACK1 and SRC, and with RACK1 (By similarity). Interacts with C1QBP; the association represents a cell surface kininogen receptor (By similarity). Interacts with EPPK1; interaction is dependent of higher-order structure of intermediate filament (By similarity).</text>
</comment>
<comment type="subcellular location">
    <subcellularLocation>
        <location evidence="3">Cell membrane</location>
    </subcellularLocation>
    <subcellularLocation>
        <location evidence="3">Cytoplasm</location>
    </subcellularLocation>
</comment>
<comment type="PTM">
    <text>Undergoes deimination of some arginine residues (citrullination).</text>
</comment>
<comment type="miscellaneous">
    <text>There are two types of cytoskeletal and microfibrillar keratin: I (acidic; 40-55 kDa) and II (neutral to basic; 56-70 kDa).</text>
</comment>
<comment type="similarity">
    <text evidence="5">Belongs to the intermediate filament family.</text>
</comment>